<evidence type="ECO:0000250" key="1"/>
<evidence type="ECO:0000250" key="2">
    <source>
        <dbReference type="UniProtKB" id="Q15014"/>
    </source>
</evidence>
<evidence type="ECO:0000255" key="3">
    <source>
        <dbReference type="PROSITE-ProRule" id="PRU00972"/>
    </source>
</evidence>
<evidence type="ECO:0000256" key="4">
    <source>
        <dbReference type="SAM" id="MobiDB-lite"/>
    </source>
</evidence>
<protein>
    <recommendedName>
        <fullName>Mortality factor 4-like protein 2</fullName>
    </recommendedName>
    <alternativeName>
        <fullName>Liver regeneration-related protein LRRG00119</fullName>
    </alternativeName>
    <alternativeName>
        <fullName>MORF-related gene X protein</fullName>
    </alternativeName>
    <alternativeName>
        <fullName>Transcription factor-like protein MRGX</fullName>
    </alternativeName>
</protein>
<name>MO4L2_RAT</name>
<accession>Q6QI89</accession>
<organism>
    <name type="scientific">Rattus norvegicus</name>
    <name type="common">Rat</name>
    <dbReference type="NCBI Taxonomy" id="10116"/>
    <lineage>
        <taxon>Eukaryota</taxon>
        <taxon>Metazoa</taxon>
        <taxon>Chordata</taxon>
        <taxon>Craniata</taxon>
        <taxon>Vertebrata</taxon>
        <taxon>Euteleostomi</taxon>
        <taxon>Mammalia</taxon>
        <taxon>Eutheria</taxon>
        <taxon>Euarchontoglires</taxon>
        <taxon>Glires</taxon>
        <taxon>Rodentia</taxon>
        <taxon>Myomorpha</taxon>
        <taxon>Muroidea</taxon>
        <taxon>Muridae</taxon>
        <taxon>Murinae</taxon>
        <taxon>Rattus</taxon>
    </lineage>
</organism>
<reference key="1">
    <citation type="submission" date="2004-02" db="EMBL/GenBank/DDBJ databases">
        <title>Liver regeneration after PH.</title>
        <authorList>
            <person name="Xu C.S."/>
            <person name="Zhang L."/>
            <person name="Chang C.F."/>
            <person name="Han H.P."/>
            <person name="Wang G.P."/>
            <person name="Chai L.Q."/>
            <person name="Yuan J.Y."/>
            <person name="Yang K.J."/>
            <person name="Zhao L.F."/>
            <person name="Ma H."/>
            <person name="Wang L."/>
            <person name="Wang S.F."/>
            <person name="Xing X.K."/>
            <person name="Shen G.M."/>
            <person name="Shi J.B."/>
            <person name="Rahman S."/>
            <person name="Wang Q.N."/>
            <person name="Zhang J.B."/>
        </authorList>
    </citation>
    <scope>NUCLEOTIDE SEQUENCE [LARGE SCALE MRNA]</scope>
    <source>
        <tissue>Liver</tissue>
    </source>
</reference>
<reference key="2">
    <citation type="journal article" date="2004" name="Genome Res.">
        <title>The status, quality, and expansion of the NIH full-length cDNA project: the Mammalian Gene Collection (MGC).</title>
        <authorList>
            <consortium name="The MGC Project Team"/>
        </authorList>
    </citation>
    <scope>NUCLEOTIDE SEQUENCE [LARGE SCALE MRNA]</scope>
    <source>
        <tissue>Testis</tissue>
    </source>
</reference>
<sequence length="288" mass="32214">MSSRKQASQTRGQQSAEEDNFKKPTRSNMQRSKMRGAASGKKSAGSQPKNLDPALPGRWGGRSAENPPSGSVRKTRKNKQKTPGNGDGGSTSEVPQPPRKKRARADPTVESEEAFKSRMEVKVKIPEELKPWLVEDWDLVTRQKQLFQLPAKKNVDAILEEYANCKKSQGNVDNKEYAVNEVVGGIKEYFNVMLGTQLLYKFERPQYAEILLAHPDAPMSQIYGAPHLLRLFVRIGAMLAYTPLDEKSLALLLGYLHDFLKYLAKNSASLFTASDYKVASADYHRKAL</sequence>
<keyword id="KW-0156">Chromatin regulator</keyword>
<keyword id="KW-0227">DNA damage</keyword>
<keyword id="KW-0234">DNA repair</keyword>
<keyword id="KW-0341">Growth regulation</keyword>
<keyword id="KW-0539">Nucleus</keyword>
<keyword id="KW-0597">Phosphoprotein</keyword>
<keyword id="KW-1185">Reference proteome</keyword>
<keyword id="KW-0804">Transcription</keyword>
<keyword id="KW-0805">Transcription regulation</keyword>
<dbReference type="EMBL" id="AY539870">
    <property type="protein sequence ID" value="AAS66210.1"/>
    <property type="molecule type" value="mRNA"/>
</dbReference>
<dbReference type="EMBL" id="BC083606">
    <property type="protein sequence ID" value="AAH83606.1"/>
    <property type="molecule type" value="mRNA"/>
</dbReference>
<dbReference type="RefSeq" id="NP_001007715.1">
    <property type="nucleotide sequence ID" value="NM_001007714.2"/>
</dbReference>
<dbReference type="RefSeq" id="NP_001421067.1">
    <property type="nucleotide sequence ID" value="NM_001434138.1"/>
</dbReference>
<dbReference type="RefSeq" id="NP_001421068.1">
    <property type="nucleotide sequence ID" value="NM_001434139.1"/>
</dbReference>
<dbReference type="RefSeq" id="NP_001421069.1">
    <property type="nucleotide sequence ID" value="NM_001434140.1"/>
</dbReference>
<dbReference type="RefSeq" id="NP_001421070.1">
    <property type="nucleotide sequence ID" value="NM_001434141.1"/>
</dbReference>
<dbReference type="RefSeq" id="NP_001421071.1">
    <property type="nucleotide sequence ID" value="NM_001434142.1"/>
</dbReference>
<dbReference type="RefSeq" id="NP_001421072.1">
    <property type="nucleotide sequence ID" value="NM_001434143.1"/>
</dbReference>
<dbReference type="RefSeq" id="XP_006257357.1">
    <property type="nucleotide sequence ID" value="XM_006257295.2"/>
</dbReference>
<dbReference type="RefSeq" id="XP_006257358.1">
    <property type="nucleotide sequence ID" value="XM_006257296.3"/>
</dbReference>
<dbReference type="RefSeq" id="XP_006257359.1">
    <property type="nucleotide sequence ID" value="XM_006257297.2"/>
</dbReference>
<dbReference type="RefSeq" id="XP_017457558.1">
    <property type="nucleotide sequence ID" value="XM_017602069.1"/>
</dbReference>
<dbReference type="SMR" id="Q6QI89"/>
<dbReference type="FunCoup" id="Q6QI89">
    <property type="interactions" value="2272"/>
</dbReference>
<dbReference type="IntAct" id="Q6QI89">
    <property type="interactions" value="1"/>
</dbReference>
<dbReference type="MINT" id="Q6QI89"/>
<dbReference type="STRING" id="10116.ENSRNOP00000003247"/>
<dbReference type="PhosphoSitePlus" id="Q6QI89"/>
<dbReference type="jPOST" id="Q6QI89"/>
<dbReference type="PaxDb" id="10116-ENSRNOP00000003247"/>
<dbReference type="Ensembl" id="ENSRNOT00000003247.6">
    <property type="protein sequence ID" value="ENSRNOP00000003247.3"/>
    <property type="gene ID" value="ENSRNOG00000002389.6"/>
</dbReference>
<dbReference type="Ensembl" id="ENSRNOT00000093840.1">
    <property type="protein sequence ID" value="ENSRNOP00000077798.1"/>
    <property type="gene ID" value="ENSRNOG00000002389.6"/>
</dbReference>
<dbReference type="Ensembl" id="ENSRNOT00000103331.1">
    <property type="protein sequence ID" value="ENSRNOP00000083693.1"/>
    <property type="gene ID" value="ENSRNOG00000002389.6"/>
</dbReference>
<dbReference type="Ensembl" id="ENSRNOT00000108398.1">
    <property type="protein sequence ID" value="ENSRNOP00000084568.1"/>
    <property type="gene ID" value="ENSRNOG00000002389.6"/>
</dbReference>
<dbReference type="Ensembl" id="ENSRNOT00000108536.1">
    <property type="protein sequence ID" value="ENSRNOP00000081349.1"/>
    <property type="gene ID" value="ENSRNOG00000002389.6"/>
</dbReference>
<dbReference type="Ensembl" id="ENSRNOT00000113826.1">
    <property type="protein sequence ID" value="ENSRNOP00000094505.1"/>
    <property type="gene ID" value="ENSRNOG00000002389.6"/>
</dbReference>
<dbReference type="Ensembl" id="ENSRNOT00000116026.1">
    <property type="protein sequence ID" value="ENSRNOP00000076571.1"/>
    <property type="gene ID" value="ENSRNOG00000002389.6"/>
</dbReference>
<dbReference type="GeneID" id="317413"/>
<dbReference type="KEGG" id="rno:317413"/>
<dbReference type="UCSC" id="RGD:1359471">
    <property type="organism name" value="rat"/>
</dbReference>
<dbReference type="AGR" id="RGD:1359471"/>
<dbReference type="CTD" id="9643"/>
<dbReference type="RGD" id="1359471">
    <property type="gene designation" value="Morf4l2"/>
</dbReference>
<dbReference type="eggNOG" id="KOG3001">
    <property type="taxonomic scope" value="Eukaryota"/>
</dbReference>
<dbReference type="GeneTree" id="ENSGT00950000182965"/>
<dbReference type="HOGENOM" id="CLU_039566_4_0_1"/>
<dbReference type="InParanoid" id="Q6QI89"/>
<dbReference type="OMA" id="PTRGNMQ"/>
<dbReference type="OrthoDB" id="124855at2759"/>
<dbReference type="PhylomeDB" id="Q6QI89"/>
<dbReference type="TreeFam" id="TF323400"/>
<dbReference type="PRO" id="PR:Q6QI89"/>
<dbReference type="Proteomes" id="UP000002494">
    <property type="component" value="Chromosome X"/>
</dbReference>
<dbReference type="Bgee" id="ENSRNOG00000002389">
    <property type="expression patterns" value="Expressed in ovary and 20 other cell types or tissues"/>
</dbReference>
<dbReference type="GO" id="GO:0035267">
    <property type="term" value="C:NuA4 histone acetyltransferase complex"/>
    <property type="evidence" value="ECO:0000266"/>
    <property type="project" value="RGD"/>
</dbReference>
<dbReference type="GO" id="GO:0005730">
    <property type="term" value="C:nucleolus"/>
    <property type="evidence" value="ECO:0000266"/>
    <property type="project" value="RGD"/>
</dbReference>
<dbReference type="GO" id="GO:0000786">
    <property type="term" value="C:nucleosome"/>
    <property type="evidence" value="ECO:0000266"/>
    <property type="project" value="RGD"/>
</dbReference>
<dbReference type="GO" id="GO:0006325">
    <property type="term" value="P:chromatin organization"/>
    <property type="evidence" value="ECO:0007669"/>
    <property type="project" value="UniProtKB-KW"/>
</dbReference>
<dbReference type="GO" id="GO:0006281">
    <property type="term" value="P:DNA repair"/>
    <property type="evidence" value="ECO:0007669"/>
    <property type="project" value="UniProtKB-KW"/>
</dbReference>
<dbReference type="GO" id="GO:1905168">
    <property type="term" value="P:positive regulation of double-strand break repair via homologous recombination"/>
    <property type="evidence" value="ECO:0000266"/>
    <property type="project" value="RGD"/>
</dbReference>
<dbReference type="GO" id="GO:0051155">
    <property type="term" value="P:positive regulation of striated muscle cell differentiation"/>
    <property type="evidence" value="ECO:0000314"/>
    <property type="project" value="MGI"/>
</dbReference>
<dbReference type="GO" id="GO:0045944">
    <property type="term" value="P:positive regulation of transcription by RNA polymerase II"/>
    <property type="evidence" value="ECO:0000314"/>
    <property type="project" value="MGI"/>
</dbReference>
<dbReference type="GO" id="GO:0051726">
    <property type="term" value="P:regulation of cell cycle"/>
    <property type="evidence" value="ECO:0000266"/>
    <property type="project" value="RGD"/>
</dbReference>
<dbReference type="FunFam" id="1.10.274.30:FF:000001">
    <property type="entry name" value="Mortality factor 4-like protein 1"/>
    <property type="match status" value="1"/>
</dbReference>
<dbReference type="Gene3D" id="1.10.274.30">
    <property type="entry name" value="MRG domain"/>
    <property type="match status" value="1"/>
</dbReference>
<dbReference type="InterPro" id="IPR008676">
    <property type="entry name" value="MRG"/>
</dbReference>
<dbReference type="InterPro" id="IPR038217">
    <property type="entry name" value="MRG_C_sf"/>
</dbReference>
<dbReference type="InterPro" id="IPR026541">
    <property type="entry name" value="MRG_dom"/>
</dbReference>
<dbReference type="PANTHER" id="PTHR10880">
    <property type="entry name" value="MORTALITY FACTOR 4-LIKE PROTEIN"/>
    <property type="match status" value="1"/>
</dbReference>
<dbReference type="PANTHER" id="PTHR10880:SF25">
    <property type="entry name" value="MORTALITY FACTOR 4-LIKE PROTEIN 2"/>
    <property type="match status" value="1"/>
</dbReference>
<dbReference type="Pfam" id="PF05712">
    <property type="entry name" value="MRG"/>
    <property type="match status" value="1"/>
</dbReference>
<dbReference type="PIRSF" id="PIRSF038133">
    <property type="entry name" value="HAT_Nua4_EAF3/MRG15"/>
    <property type="match status" value="1"/>
</dbReference>
<dbReference type="PROSITE" id="PS51640">
    <property type="entry name" value="MRG"/>
    <property type="match status" value="1"/>
</dbReference>
<gene>
    <name type="primary">Morf4l2</name>
</gene>
<comment type="function">
    <text evidence="1">Component of the NuA4 histone acetyltransferase complex which is involved in transcriptional activation of select genes principally by acetylation of nucleosomal histone H4 and H2A. This modification may both alter nucleosome - DNA interactions and promote interaction of the modified histones with other proteins which positively regulate transcription. This complex may be required for the activation of transcriptional programs associated with oncogene and proto-oncogene mediated growth induction, tumor suppressor mediated growth arrest and replicative senescence, apoptosis, and DNA repair. The NuA4 complex ATPase and helicase activities seem to be, at least in part, contributed by the association of RUVBL1 and RUVBL2 with EP400. NuA4 may also play a direct role in DNA repair when directly recruited to sites of DNA damage. Also a component of the MSIN3A complex which acts to repress transcription by deacetylation of nucleosomal histones (By similarity).</text>
</comment>
<comment type="subunit">
    <text evidence="1">Component of the NuA4 histone acetyltransferase complex which contains the catalytic subunit KAT5/TIP60 and the subunits EP400, TRRAP/PAF400, BRD8/SMAP, EPC1, DMAP1/DNMAP1, RUVBL1/TIP49, RUVBL2, ING3, actin, ACTL6A/BAF53A, MORF4L1/MRG15, MORF4L2/MRGX, MRGBP, YEATS4/GAS41 and VPS72/YL1. The NuA4 complex interacts with MYC and the adenovirus E1A protein. MORF4L1 may also participate in the formation of NuA4 related complexes which lack the KAT5/TIP60 catalytic subunit, but which include the SWI/SNF related protein SRCAP. Component of the MSIN3A histone deacetylase complex, which includes SIN3A, HDAC2, ARID4B, MORF4L1, RBBP4/RbAp48, and RBBP7/RbAp46. Interacts with MRFAP1 and RB1. May also interact with one or more as yet undefined members of the TLE (transducin-like enhancer of split) family of transcriptional repressors (By similarity).</text>
</comment>
<comment type="subcellular location">
    <subcellularLocation>
        <location evidence="3">Nucleus</location>
    </subcellularLocation>
</comment>
<feature type="chain" id="PRO_0000088770" description="Mortality factor 4-like protein 2">
    <location>
        <begin position="1"/>
        <end position="288"/>
    </location>
</feature>
<feature type="domain" description="MRG" evidence="3">
    <location>
        <begin position="117"/>
        <end position="288"/>
    </location>
</feature>
<feature type="region of interest" description="Disordered" evidence="4">
    <location>
        <begin position="1"/>
        <end position="115"/>
    </location>
</feature>
<feature type="compositionally biased region" description="Polar residues" evidence="4">
    <location>
        <begin position="1"/>
        <end position="15"/>
    </location>
</feature>
<feature type="modified residue" description="Phosphoserine" evidence="2">
    <location>
        <position position="71"/>
    </location>
</feature>
<proteinExistence type="evidence at transcript level"/>